<name>YCS5_ECOLX</name>
<feature type="signal peptide" evidence="1">
    <location>
        <begin position="1"/>
        <end position="16"/>
    </location>
</feature>
<feature type="chain" id="PRO_0000022703" description="Uncharacterized 25.9 kDa protein in CS5 3'region">
    <location>
        <begin position="17"/>
        <end position="224"/>
    </location>
</feature>
<accession>P33792</accession>
<proteinExistence type="inferred from homology"/>
<reference key="1">
    <citation type="submission" date="1998-02" db="EMBL/GenBank/DDBJ databases">
        <title>Colonization factor antigen CFA/IV (PCF8775) of human enterotoxigenic Escherichia coli: nucleotide sequence and characterization of the CS5 fimbrial operon.</title>
        <authorList>
            <person name="Duthy T.G."/>
            <person name="Staendner L.H."/>
            <person name="Manning P.A."/>
        </authorList>
    </citation>
    <scope>NUCLEOTIDE SEQUENCE [GENOMIC DNA]</scope>
    <source>
        <strain>O115:H40 / ETEC</strain>
    </source>
</reference>
<reference key="2">
    <citation type="journal article" date="1992" name="Infect. Immun.">
        <title>Colonization factor antigen CFA/IV (PCF8775) of human enterotoxigenic Escherichia coli: nucleotide sequence of the CS5 determinant.</title>
        <authorList>
            <person name="Clark C.A."/>
            <person name="Heuzenroeder M.W."/>
            <person name="Manning P.A."/>
        </authorList>
    </citation>
    <scope>NUCLEOTIDE SEQUENCE [GENOMIC DNA] OF 1-76</scope>
    <source>
        <strain>O115:H40 / ETEC</strain>
    </source>
</reference>
<evidence type="ECO:0000255" key="1"/>
<protein>
    <recommendedName>
        <fullName>Uncharacterized 25.9 kDa protein in CS5 3'region</fullName>
    </recommendedName>
</protein>
<organism>
    <name type="scientific">Escherichia coli</name>
    <dbReference type="NCBI Taxonomy" id="562"/>
    <lineage>
        <taxon>Bacteria</taxon>
        <taxon>Pseudomonadati</taxon>
        <taxon>Pseudomonadota</taxon>
        <taxon>Gammaproteobacteria</taxon>
        <taxon>Enterobacterales</taxon>
        <taxon>Enterobacteriaceae</taxon>
        <taxon>Escherichia</taxon>
    </lineage>
</organism>
<geneLocation type="plasmid"/>
<dbReference type="EMBL" id="AJ224079">
    <property type="protein sequence ID" value="CAA11821.1"/>
    <property type="molecule type" value="Genomic_DNA"/>
</dbReference>
<dbReference type="EMBL" id="X63411">
    <property type="protein sequence ID" value="CAA45009.1"/>
    <property type="molecule type" value="Genomic_DNA"/>
</dbReference>
<dbReference type="PIR" id="B43856">
    <property type="entry name" value="B43856"/>
</dbReference>
<dbReference type="SMR" id="P33792"/>
<sequence>MKILYSFLLLPFFSCAFSVDSMIKFSGEDDFFLVNGNSKEREYIYVTLSELISEKNNRRDEIFYNADNVPLWPISAEPADIIISSGEQVKIKINKNYTPVGGDRIFGINFSPDTLNDNDRNQYNIPFGYKAWLIVPGTESESGTVDVSKVSEKNKYIIKNNTNKVMDVWADYCGSYNNNKCRVQLITRPYSEKKIEIDSNNNPIEFTFSIYIGRERKLIKRKIL</sequence>
<keyword id="KW-0614">Plasmid</keyword>
<keyword id="KW-0732">Signal</keyword>